<protein>
    <recommendedName>
        <fullName>Cadherin-related family member 1</fullName>
    </recommendedName>
    <alternativeName>
        <fullName>Photoreceptor cadherin</fullName>
        <shortName>prCAD</shortName>
    </alternativeName>
    <alternativeName>
        <fullName>Protocadherin-21</fullName>
    </alternativeName>
</protein>
<gene>
    <name type="primary">cdhr1</name>
    <name type="synonym">pcdh21</name>
    <name type="synonym">prcad</name>
</gene>
<reference key="1">
    <citation type="journal article" date="2004" name="J. Biol. Chem.">
        <title>Proteolytic shedding of the extracellular domain of photoreceptor cadherin. Implications for outer segment assembly.</title>
        <authorList>
            <person name="Rattner A."/>
            <person name="Chen J."/>
            <person name="Nathans J."/>
        </authorList>
    </citation>
    <scope>NUCLEOTIDE SEQUENCE [MRNA]</scope>
    <scope>DEVELOPMENTAL STAGE</scope>
    <scope>TISSUE SPECIFICITY</scope>
</reference>
<name>CDHR1_XENLA</name>
<organism>
    <name type="scientific">Xenopus laevis</name>
    <name type="common">African clawed frog</name>
    <dbReference type="NCBI Taxonomy" id="8355"/>
    <lineage>
        <taxon>Eukaryota</taxon>
        <taxon>Metazoa</taxon>
        <taxon>Chordata</taxon>
        <taxon>Craniata</taxon>
        <taxon>Vertebrata</taxon>
        <taxon>Euteleostomi</taxon>
        <taxon>Amphibia</taxon>
        <taxon>Batrachia</taxon>
        <taxon>Anura</taxon>
        <taxon>Pipoidea</taxon>
        <taxon>Pipidae</taxon>
        <taxon>Xenopodinae</taxon>
        <taxon>Xenopus</taxon>
        <taxon>Xenopus</taxon>
    </lineage>
</organism>
<comment type="function">
    <text>Potential calcium-dependent cell-adhesion protein.</text>
</comment>
<comment type="subcellular location">
    <subcellularLocation>
        <location evidence="5">Membrane</location>
        <topology evidence="5">Single-pass membrane protein</topology>
    </subcellularLocation>
</comment>
<comment type="tissue specificity">
    <text evidence="4">Expressed in photoreceptor cells of the outer nuclear layer of the retina and in the pinal gland.</text>
</comment>
<comment type="developmental stage">
    <text evidence="4">Expressed in the retina 3 days post-fertilization (hpf).</text>
</comment>
<keyword id="KW-0106">Calcium</keyword>
<keyword id="KW-0130">Cell adhesion</keyword>
<keyword id="KW-0472">Membrane</keyword>
<keyword id="KW-0675">Receptor</keyword>
<keyword id="KW-1185">Reference proteome</keyword>
<keyword id="KW-0677">Repeat</keyword>
<keyword id="KW-0732">Signal</keyword>
<keyword id="KW-0812">Transmembrane</keyword>
<keyword id="KW-1133">Transmembrane helix</keyword>
<evidence type="ECO:0000255" key="1"/>
<evidence type="ECO:0000255" key="2">
    <source>
        <dbReference type="PROSITE-ProRule" id="PRU00043"/>
    </source>
</evidence>
<evidence type="ECO:0000256" key="3">
    <source>
        <dbReference type="SAM" id="MobiDB-lite"/>
    </source>
</evidence>
<evidence type="ECO:0000269" key="4">
    <source>
    </source>
</evidence>
<evidence type="ECO:0000305" key="5"/>
<feature type="signal peptide" evidence="1">
    <location>
        <begin position="1"/>
        <end position="21"/>
    </location>
</feature>
<feature type="chain" id="PRO_0000318503" description="Cadherin-related family member 1">
    <location>
        <begin position="22"/>
        <end position="867"/>
    </location>
</feature>
<feature type="topological domain" description="Extracellular" evidence="1">
    <location>
        <begin position="22"/>
        <end position="707"/>
    </location>
</feature>
<feature type="transmembrane region" description="Helical" evidence="1">
    <location>
        <begin position="708"/>
        <end position="728"/>
    </location>
</feature>
<feature type="topological domain" description="Cytoplasmic" evidence="1">
    <location>
        <begin position="729"/>
        <end position="867"/>
    </location>
</feature>
<feature type="domain" description="Cadherin 1" evidence="2">
    <location>
        <begin position="39"/>
        <end position="138"/>
    </location>
</feature>
<feature type="domain" description="Cadherin 2" evidence="2">
    <location>
        <begin position="139"/>
        <end position="250"/>
    </location>
</feature>
<feature type="domain" description="Cadherin 3" evidence="2">
    <location>
        <begin position="251"/>
        <end position="357"/>
    </location>
</feature>
<feature type="domain" description="Cadherin 4" evidence="2">
    <location>
        <begin position="363"/>
        <end position="476"/>
    </location>
</feature>
<feature type="domain" description="Cadherin 5" evidence="2">
    <location>
        <begin position="477"/>
        <end position="580"/>
    </location>
</feature>
<feature type="domain" description="Cadherin 6" evidence="2">
    <location>
        <begin position="572"/>
        <end position="692"/>
    </location>
</feature>
<feature type="region of interest" description="Disordered" evidence="3">
    <location>
        <begin position="777"/>
        <end position="825"/>
    </location>
</feature>
<feature type="compositionally biased region" description="Pro residues" evidence="3">
    <location>
        <begin position="795"/>
        <end position="809"/>
    </location>
</feature>
<dbReference type="EMBL" id="AY683207">
    <property type="protein sequence ID" value="AAT91269.1"/>
    <property type="molecule type" value="mRNA"/>
</dbReference>
<dbReference type="RefSeq" id="NP_001165667.1">
    <property type="nucleotide sequence ID" value="NM_001172196.1"/>
</dbReference>
<dbReference type="SMR" id="Q6B457"/>
<dbReference type="GeneID" id="100337587"/>
<dbReference type="KEGG" id="xla:100337587"/>
<dbReference type="AGR" id="Xenbase:XB-GENE-865231"/>
<dbReference type="CTD" id="100337587"/>
<dbReference type="Xenbase" id="XB-GENE-865231">
    <property type="gene designation" value="cdhr1.L"/>
</dbReference>
<dbReference type="OrthoDB" id="6510378at2759"/>
<dbReference type="Proteomes" id="UP000186698">
    <property type="component" value="Chromosome 7L"/>
</dbReference>
<dbReference type="Bgee" id="100337587">
    <property type="expression patterns" value="Expressed in camera-type eye and 6 other cell types or tissues"/>
</dbReference>
<dbReference type="GO" id="GO:0005911">
    <property type="term" value="C:cell-cell junction"/>
    <property type="evidence" value="ECO:0000318"/>
    <property type="project" value="GO_Central"/>
</dbReference>
<dbReference type="GO" id="GO:0005886">
    <property type="term" value="C:plasma membrane"/>
    <property type="evidence" value="ECO:0007669"/>
    <property type="project" value="InterPro"/>
</dbReference>
<dbReference type="GO" id="GO:0005509">
    <property type="term" value="F:calcium ion binding"/>
    <property type="evidence" value="ECO:0000318"/>
    <property type="project" value="GO_Central"/>
</dbReference>
<dbReference type="GO" id="GO:0098609">
    <property type="term" value="P:cell-cell adhesion"/>
    <property type="evidence" value="ECO:0000318"/>
    <property type="project" value="GO_Central"/>
</dbReference>
<dbReference type="GO" id="GO:0007156">
    <property type="term" value="P:homophilic cell adhesion via plasma membrane adhesion molecules"/>
    <property type="evidence" value="ECO:0007669"/>
    <property type="project" value="InterPro"/>
</dbReference>
<dbReference type="CDD" id="cd11304">
    <property type="entry name" value="Cadherin_repeat"/>
    <property type="match status" value="6"/>
</dbReference>
<dbReference type="FunFam" id="2.60.40.60:FF:000111">
    <property type="entry name" value="Cadherin-related family member 1"/>
    <property type="match status" value="1"/>
</dbReference>
<dbReference type="FunFam" id="2.60.40.60:FF:000113">
    <property type="entry name" value="Cadherin-related family member 1"/>
    <property type="match status" value="1"/>
</dbReference>
<dbReference type="FunFam" id="2.60.40.60:FF:000122">
    <property type="entry name" value="Cadherin-related family member 1"/>
    <property type="match status" value="1"/>
</dbReference>
<dbReference type="FunFam" id="2.60.40.60:FF:000124">
    <property type="entry name" value="Cadherin-related family member 1"/>
    <property type="match status" value="1"/>
</dbReference>
<dbReference type="FunFam" id="2.60.40.60:FF:000126">
    <property type="entry name" value="Cadherin-related family member 1"/>
    <property type="match status" value="1"/>
</dbReference>
<dbReference type="FunFam" id="2.60.40.60:FF:000177">
    <property type="entry name" value="Cadherin-related family member 1"/>
    <property type="match status" value="1"/>
</dbReference>
<dbReference type="Gene3D" id="2.60.40.60">
    <property type="entry name" value="Cadherins"/>
    <property type="match status" value="6"/>
</dbReference>
<dbReference type="InterPro" id="IPR050971">
    <property type="entry name" value="Cadherin-domain_protein"/>
</dbReference>
<dbReference type="InterPro" id="IPR002126">
    <property type="entry name" value="Cadherin-like_dom"/>
</dbReference>
<dbReference type="InterPro" id="IPR015919">
    <property type="entry name" value="Cadherin-like_sf"/>
</dbReference>
<dbReference type="InterPro" id="IPR020894">
    <property type="entry name" value="Cadherin_CS"/>
</dbReference>
<dbReference type="PANTHER" id="PTHR24025">
    <property type="entry name" value="DESMOGLEIN FAMILY MEMBER"/>
    <property type="match status" value="1"/>
</dbReference>
<dbReference type="PANTHER" id="PTHR24025:SF31">
    <property type="entry name" value="NEURAL-CADHERIN"/>
    <property type="match status" value="1"/>
</dbReference>
<dbReference type="Pfam" id="PF00028">
    <property type="entry name" value="Cadherin"/>
    <property type="match status" value="5"/>
</dbReference>
<dbReference type="PRINTS" id="PR00205">
    <property type="entry name" value="CADHERIN"/>
</dbReference>
<dbReference type="SMART" id="SM00112">
    <property type="entry name" value="CA"/>
    <property type="match status" value="6"/>
</dbReference>
<dbReference type="SUPFAM" id="SSF49313">
    <property type="entry name" value="Cadherin-like"/>
    <property type="match status" value="6"/>
</dbReference>
<dbReference type="PROSITE" id="PS00232">
    <property type="entry name" value="CADHERIN_1"/>
    <property type="match status" value="2"/>
</dbReference>
<dbReference type="PROSITE" id="PS50268">
    <property type="entry name" value="CADHERIN_2"/>
    <property type="match status" value="6"/>
</dbReference>
<proteinExistence type="evidence at transcript level"/>
<accession>Q6B457</accession>
<sequence length="867" mass="95725">MKHEWNLCPSIFFSIFHICLSVQTNYGPYFFDNGPGSTNGNMALLSLSEDTPVGAYIYALNGSDPDGDPVTFGLTFEPGSKRYFAVDPDNGNVTLIEELDREKQDEIEVIVSISDGINKVSEKVRVLVTDANDESPGFLNTPYIVTVPEDTPPGSSIFKIEAVDKDTGSGGSITYIIQEMHGSKFTIDRHSGVLRIKAGVSLDFEKSRTHFVSVLAKDGGGKLRGKNQVFTSTTTVTINVEDVQDSPPVFVGTPYYGYVYEDTTMGSEVLTVKAYDGDRGNPNTIYYSIVNGSDGAFTINNATGGITVIKTPDELKKEVYELKIQVSEITPEGDKVAHAFTVATVRVVDLNNHPPTFYGENGPQNRFELTMYEHPPEGEILRGLKITVNDSDQGANAKFNLRLVGPGGIFRVVPQTVLNEAQVTIIVENSAGIDYEKFHLFTFKLLAIEVNTPEKFSSTADITIHLLDINDNVPRFSSEYYIARIPENSPGGSNVVAATATDLDSGLWGEIKYSIYGPGSDPFLIHPSTGIIYTQPWASLDAEVTSKYNFYVKAEDTEGKYSLAEVFVTVLDINDHSPEFSENIQEKTLIIGTPVKIEATDHDAEEPNNIVDYSIMQADPSNVFDIDQSTGEIKLKSYIRSLDIIQNITRNKDCKWSVVVQAKDRGSPSFSTTAVVKIDVTEETLLHKGPMAAFLMQSKDNPMKALGVLAGVMAIMVVITIFISTAMFWRNKKSNRVMPLRRIIKRRKNDHPPRTARTEWLKFKKSNNSADKFTIQEMESGPKNENRNNNYQGIPVPPRAPCPPPPPRLMPKVSKTERSLPTVSGSLTPKIIDQQMNERVPSASAALVSELKQMLEKKNAGSSMSFY</sequence>